<gene>
    <name evidence="1" type="primary">purH</name>
    <name type="ordered locus">EC55989_4491</name>
</gene>
<evidence type="ECO:0000255" key="1">
    <source>
        <dbReference type="HAMAP-Rule" id="MF_00139"/>
    </source>
</evidence>
<evidence type="ECO:0000255" key="2">
    <source>
        <dbReference type="PROSITE-ProRule" id="PRU01202"/>
    </source>
</evidence>
<proteinExistence type="inferred from homology"/>
<protein>
    <recommendedName>
        <fullName evidence="1">Bifunctional purine biosynthesis protein PurH</fullName>
    </recommendedName>
    <domain>
        <recommendedName>
            <fullName evidence="1">Phosphoribosylaminoimidazolecarboxamide formyltransferase</fullName>
            <ecNumber evidence="1">2.1.2.3</ecNumber>
        </recommendedName>
        <alternativeName>
            <fullName evidence="1">AICAR transformylase</fullName>
        </alternativeName>
    </domain>
    <domain>
        <recommendedName>
            <fullName evidence="1">IMP cyclohydrolase</fullName>
            <ecNumber evidence="1">3.5.4.10</ecNumber>
        </recommendedName>
        <alternativeName>
            <fullName evidence="1">ATIC</fullName>
        </alternativeName>
        <alternativeName>
            <fullName evidence="1">IMP synthase</fullName>
        </alternativeName>
        <alternativeName>
            <fullName evidence="1">Inosinicase</fullName>
        </alternativeName>
    </domain>
</protein>
<reference key="1">
    <citation type="journal article" date="2009" name="PLoS Genet.">
        <title>Organised genome dynamics in the Escherichia coli species results in highly diverse adaptive paths.</title>
        <authorList>
            <person name="Touchon M."/>
            <person name="Hoede C."/>
            <person name="Tenaillon O."/>
            <person name="Barbe V."/>
            <person name="Baeriswyl S."/>
            <person name="Bidet P."/>
            <person name="Bingen E."/>
            <person name="Bonacorsi S."/>
            <person name="Bouchier C."/>
            <person name="Bouvet O."/>
            <person name="Calteau A."/>
            <person name="Chiapello H."/>
            <person name="Clermont O."/>
            <person name="Cruveiller S."/>
            <person name="Danchin A."/>
            <person name="Diard M."/>
            <person name="Dossat C."/>
            <person name="Karoui M.E."/>
            <person name="Frapy E."/>
            <person name="Garry L."/>
            <person name="Ghigo J.M."/>
            <person name="Gilles A.M."/>
            <person name="Johnson J."/>
            <person name="Le Bouguenec C."/>
            <person name="Lescat M."/>
            <person name="Mangenot S."/>
            <person name="Martinez-Jehanne V."/>
            <person name="Matic I."/>
            <person name="Nassif X."/>
            <person name="Oztas S."/>
            <person name="Petit M.A."/>
            <person name="Pichon C."/>
            <person name="Rouy Z."/>
            <person name="Ruf C.S."/>
            <person name="Schneider D."/>
            <person name="Tourret J."/>
            <person name="Vacherie B."/>
            <person name="Vallenet D."/>
            <person name="Medigue C."/>
            <person name="Rocha E.P.C."/>
            <person name="Denamur E."/>
        </authorList>
    </citation>
    <scope>NUCLEOTIDE SEQUENCE [LARGE SCALE GENOMIC DNA]</scope>
    <source>
        <strain>55989 / EAEC</strain>
    </source>
</reference>
<sequence length="529" mass="57329">MQQRRPVRRALLSVSDKAGIVEFAQALSARGVELLSTGGTARLLAEKGLPVTEVSDYTGFPEMMDGRVKTLHPKVHGGILGRRGQDDAIMEEHQIQPIDMVVVNLYPFAQTVAREGCSLEDAVENIDIGGPTMVRSAAKNHKDVAIVVKSSDYDAIIKEMDDNEGSLTLATRFDLAIKAFEHTAAYDSMIANYFGSMVPAYHGESKEAAGRFPRTLNLNFIKKLDMRYGENSHQQAAFYIEENVKEASVATATQVQGKALSYNNIADTDAALECVKEFAEPACVIVKHANPCGVAIGNSILDAYDRAYKTDPTSAFGGIIAFNRELDAETAQAIISRQFVEVIIAPSASEEALKITAAKQNVRVLTCGQWGERVPGLDFKRVNGGLLVQDRDLGMVGAEELRVVTKRQPSEQELRDALFCWKVAKFVKSNAIVYAKNNMTIGIGAGQMSRVYSAKIAGIKAADEGLEVKGSSMASDAFFPFRDGIDAAAAAGVTCVIQPGGSIRDDEVIAAADEHGIAMLFTDMRHFRH</sequence>
<comment type="catalytic activity">
    <reaction evidence="1">
        <text>(6R)-10-formyltetrahydrofolate + 5-amino-1-(5-phospho-beta-D-ribosyl)imidazole-4-carboxamide = 5-formamido-1-(5-phospho-D-ribosyl)imidazole-4-carboxamide + (6S)-5,6,7,8-tetrahydrofolate</text>
        <dbReference type="Rhea" id="RHEA:22192"/>
        <dbReference type="ChEBI" id="CHEBI:57453"/>
        <dbReference type="ChEBI" id="CHEBI:58467"/>
        <dbReference type="ChEBI" id="CHEBI:58475"/>
        <dbReference type="ChEBI" id="CHEBI:195366"/>
        <dbReference type="EC" id="2.1.2.3"/>
    </reaction>
</comment>
<comment type="catalytic activity">
    <reaction evidence="1">
        <text>IMP + H2O = 5-formamido-1-(5-phospho-D-ribosyl)imidazole-4-carboxamide</text>
        <dbReference type="Rhea" id="RHEA:18445"/>
        <dbReference type="ChEBI" id="CHEBI:15377"/>
        <dbReference type="ChEBI" id="CHEBI:58053"/>
        <dbReference type="ChEBI" id="CHEBI:58467"/>
        <dbReference type="EC" id="3.5.4.10"/>
    </reaction>
</comment>
<comment type="pathway">
    <text evidence="1">Purine metabolism; IMP biosynthesis via de novo pathway; 5-formamido-1-(5-phospho-D-ribosyl)imidazole-4-carboxamide from 5-amino-1-(5-phospho-D-ribosyl)imidazole-4-carboxamide (10-formyl THF route): step 1/1.</text>
</comment>
<comment type="pathway">
    <text evidence="1">Purine metabolism; IMP biosynthesis via de novo pathway; IMP from 5-formamido-1-(5-phospho-D-ribosyl)imidazole-4-carboxamide: step 1/1.</text>
</comment>
<comment type="domain">
    <text evidence="1">The IMP cyclohydrolase activity resides in the N-terminal region.</text>
</comment>
<comment type="similarity">
    <text evidence="1">Belongs to the PurH family.</text>
</comment>
<name>PUR9_ECO55</name>
<feature type="chain" id="PRO_1000122959" description="Bifunctional purine biosynthesis protein PurH">
    <location>
        <begin position="1"/>
        <end position="529"/>
    </location>
</feature>
<feature type="domain" description="MGS-like" evidence="2">
    <location>
        <begin position="1"/>
        <end position="148"/>
    </location>
</feature>
<feature type="modified residue" description="N6-acetyllysine" evidence="1">
    <location>
        <position position="287"/>
    </location>
</feature>
<keyword id="KW-0007">Acetylation</keyword>
<keyword id="KW-0378">Hydrolase</keyword>
<keyword id="KW-0511">Multifunctional enzyme</keyword>
<keyword id="KW-0658">Purine biosynthesis</keyword>
<keyword id="KW-1185">Reference proteome</keyword>
<keyword id="KW-0808">Transferase</keyword>
<organism>
    <name type="scientific">Escherichia coli (strain 55989 / EAEC)</name>
    <dbReference type="NCBI Taxonomy" id="585055"/>
    <lineage>
        <taxon>Bacteria</taxon>
        <taxon>Pseudomonadati</taxon>
        <taxon>Pseudomonadota</taxon>
        <taxon>Gammaproteobacteria</taxon>
        <taxon>Enterobacterales</taxon>
        <taxon>Enterobacteriaceae</taxon>
        <taxon>Escherichia</taxon>
    </lineage>
</organism>
<dbReference type="EC" id="2.1.2.3" evidence="1"/>
<dbReference type="EC" id="3.5.4.10" evidence="1"/>
<dbReference type="EMBL" id="CU928145">
    <property type="protein sequence ID" value="CAV01263.1"/>
    <property type="molecule type" value="Genomic_DNA"/>
</dbReference>
<dbReference type="RefSeq" id="WP_001187559.1">
    <property type="nucleotide sequence ID" value="NC_011748.1"/>
</dbReference>
<dbReference type="SMR" id="B7LAV3"/>
<dbReference type="KEGG" id="eck:EC55989_4491"/>
<dbReference type="HOGENOM" id="CLU_016316_5_2_6"/>
<dbReference type="UniPathway" id="UPA00074">
    <property type="reaction ID" value="UER00133"/>
</dbReference>
<dbReference type="UniPathway" id="UPA00074">
    <property type="reaction ID" value="UER00135"/>
</dbReference>
<dbReference type="Proteomes" id="UP000000746">
    <property type="component" value="Chromosome"/>
</dbReference>
<dbReference type="GO" id="GO:0005829">
    <property type="term" value="C:cytosol"/>
    <property type="evidence" value="ECO:0007669"/>
    <property type="project" value="TreeGrafter"/>
</dbReference>
<dbReference type="GO" id="GO:0003937">
    <property type="term" value="F:IMP cyclohydrolase activity"/>
    <property type="evidence" value="ECO:0007669"/>
    <property type="project" value="UniProtKB-UniRule"/>
</dbReference>
<dbReference type="GO" id="GO:0004643">
    <property type="term" value="F:phosphoribosylaminoimidazolecarboxamide formyltransferase activity"/>
    <property type="evidence" value="ECO:0007669"/>
    <property type="project" value="UniProtKB-UniRule"/>
</dbReference>
<dbReference type="GO" id="GO:0006189">
    <property type="term" value="P:'de novo' IMP biosynthetic process"/>
    <property type="evidence" value="ECO:0007669"/>
    <property type="project" value="UniProtKB-UniRule"/>
</dbReference>
<dbReference type="CDD" id="cd01421">
    <property type="entry name" value="IMPCH"/>
    <property type="match status" value="1"/>
</dbReference>
<dbReference type="FunFam" id="3.40.140.20:FF:000001">
    <property type="entry name" value="Bifunctional purine biosynthesis protein PurH"/>
    <property type="match status" value="1"/>
</dbReference>
<dbReference type="FunFam" id="3.40.140.20:FF:000002">
    <property type="entry name" value="Bifunctional purine biosynthesis protein PurH"/>
    <property type="match status" value="1"/>
</dbReference>
<dbReference type="FunFam" id="3.40.50.1380:FF:000001">
    <property type="entry name" value="Bifunctional purine biosynthesis protein PurH"/>
    <property type="match status" value="1"/>
</dbReference>
<dbReference type="Gene3D" id="3.40.140.20">
    <property type="match status" value="2"/>
</dbReference>
<dbReference type="Gene3D" id="3.40.50.1380">
    <property type="entry name" value="Methylglyoxal synthase-like domain"/>
    <property type="match status" value="1"/>
</dbReference>
<dbReference type="HAMAP" id="MF_00139">
    <property type="entry name" value="PurH"/>
    <property type="match status" value="1"/>
</dbReference>
<dbReference type="InterPro" id="IPR024051">
    <property type="entry name" value="AICAR_Tfase_dup_dom_sf"/>
</dbReference>
<dbReference type="InterPro" id="IPR016193">
    <property type="entry name" value="Cytidine_deaminase-like"/>
</dbReference>
<dbReference type="InterPro" id="IPR011607">
    <property type="entry name" value="MGS-like_dom"/>
</dbReference>
<dbReference type="InterPro" id="IPR036914">
    <property type="entry name" value="MGS-like_dom_sf"/>
</dbReference>
<dbReference type="InterPro" id="IPR002695">
    <property type="entry name" value="PurH-like"/>
</dbReference>
<dbReference type="NCBIfam" id="NF002049">
    <property type="entry name" value="PRK00881.1"/>
    <property type="match status" value="1"/>
</dbReference>
<dbReference type="NCBIfam" id="TIGR00355">
    <property type="entry name" value="purH"/>
    <property type="match status" value="1"/>
</dbReference>
<dbReference type="PANTHER" id="PTHR11692:SF0">
    <property type="entry name" value="BIFUNCTIONAL PURINE BIOSYNTHESIS PROTEIN ATIC"/>
    <property type="match status" value="1"/>
</dbReference>
<dbReference type="PANTHER" id="PTHR11692">
    <property type="entry name" value="BIFUNCTIONAL PURINE BIOSYNTHESIS PROTEIN PURH"/>
    <property type="match status" value="1"/>
</dbReference>
<dbReference type="Pfam" id="PF01808">
    <property type="entry name" value="AICARFT_IMPCHas"/>
    <property type="match status" value="1"/>
</dbReference>
<dbReference type="Pfam" id="PF02142">
    <property type="entry name" value="MGS"/>
    <property type="match status" value="1"/>
</dbReference>
<dbReference type="PIRSF" id="PIRSF000414">
    <property type="entry name" value="AICARFT_IMPCHas"/>
    <property type="match status" value="1"/>
</dbReference>
<dbReference type="SMART" id="SM00798">
    <property type="entry name" value="AICARFT_IMPCHas"/>
    <property type="match status" value="1"/>
</dbReference>
<dbReference type="SMART" id="SM00851">
    <property type="entry name" value="MGS"/>
    <property type="match status" value="1"/>
</dbReference>
<dbReference type="SUPFAM" id="SSF53927">
    <property type="entry name" value="Cytidine deaminase-like"/>
    <property type="match status" value="1"/>
</dbReference>
<dbReference type="SUPFAM" id="SSF52335">
    <property type="entry name" value="Methylglyoxal synthase-like"/>
    <property type="match status" value="1"/>
</dbReference>
<dbReference type="PROSITE" id="PS51855">
    <property type="entry name" value="MGS"/>
    <property type="match status" value="1"/>
</dbReference>
<accession>B7LAV3</accession>